<reference key="1">
    <citation type="submission" date="2006-04" db="EMBL/GenBank/DDBJ databases">
        <authorList>
            <consortium name="NIH - Mammalian Gene Collection (MGC) project"/>
        </authorList>
    </citation>
    <scope>NUCLEOTIDE SEQUENCE [LARGE SCALE MRNA]</scope>
    <source>
        <strain>Hereford</strain>
        <tissue>Heart ventricle</tissue>
    </source>
</reference>
<evidence type="ECO:0000250" key="1"/>
<evidence type="ECO:0000250" key="2">
    <source>
        <dbReference type="UniProtKB" id="P08134"/>
    </source>
</evidence>
<evidence type="ECO:0000250" key="3">
    <source>
        <dbReference type="UniProtKB" id="Q62159"/>
    </source>
</evidence>
<evidence type="ECO:0000255" key="4"/>
<evidence type="ECO:0000305" key="5"/>
<keyword id="KW-1003">Cell membrane</keyword>
<keyword id="KW-0342">GTP-binding</keyword>
<keyword id="KW-0449">Lipoprotein</keyword>
<keyword id="KW-0472">Membrane</keyword>
<keyword id="KW-0488">Methylation</keyword>
<keyword id="KW-0547">Nucleotide-binding</keyword>
<keyword id="KW-0636">Prenylation</keyword>
<keyword id="KW-1185">Reference proteome</keyword>
<proteinExistence type="evidence at transcript level"/>
<sequence length="193" mass="22006">MAAIRKKLVIVGDGACGKTCLLIVFSKDQFPEVYVPTVFENYIADIEVDGKQVELALWDTAGQEDYDRLRPLSYPDTDVILMCFSIDSPDSLENIPEKWTPEVKHFCPNVPIILVGNKKDLRQDEHTRRELAKMKQEPVRSEEGRDMANRISAFGYLECSAKTKEGVREVFEMATRAGLQVRKNKRRRGCPIL</sequence>
<feature type="chain" id="PRO_0000265728" description="Rho-related GTP-binding protein RhoC">
    <location>
        <begin position="1"/>
        <end position="190"/>
    </location>
</feature>
<feature type="propeptide" id="PRO_0000265729" description="Removed in mature form" evidence="1">
    <location>
        <begin position="191"/>
        <end position="193"/>
    </location>
</feature>
<feature type="short sequence motif" description="Effector region" evidence="4">
    <location>
        <begin position="34"/>
        <end position="42"/>
    </location>
</feature>
<feature type="binding site" evidence="1">
    <location>
        <begin position="12"/>
        <end position="19"/>
    </location>
    <ligand>
        <name>GTP</name>
        <dbReference type="ChEBI" id="CHEBI:37565"/>
    </ligand>
</feature>
<feature type="binding site" evidence="1">
    <location>
        <begin position="59"/>
        <end position="63"/>
    </location>
    <ligand>
        <name>GTP</name>
        <dbReference type="ChEBI" id="CHEBI:37565"/>
    </ligand>
</feature>
<feature type="binding site" evidence="1">
    <location>
        <begin position="117"/>
        <end position="120"/>
    </location>
    <ligand>
        <name>GTP</name>
        <dbReference type="ChEBI" id="CHEBI:37565"/>
    </ligand>
</feature>
<feature type="modified residue" description="Cysteine methyl ester" evidence="1">
    <location>
        <position position="190"/>
    </location>
</feature>
<feature type="lipid moiety-binding region" description="S-geranylgeranyl cysteine" evidence="1">
    <location>
        <position position="190"/>
    </location>
</feature>
<comment type="function">
    <text evidence="1">Regulates a signal transduction pathway linking plasma membrane receptors to the assembly of focal adhesions and actin stress fibers. Serves as a microtubule-dependent signal that is required for the myosin contractile ring formation during cell cycle cytokinesis. Regulates apical junction formation in bronchial epithelial cells (By similarity).</text>
</comment>
<comment type="subunit">
    <text evidence="2 3">Interacts with RTKN. Interacts with AKAP13. Interacts with DIAPH1. Interacts with PKN2. Interacts with ROCK1 and ROCK2. Interacts with ARHGDIA. Interacts with RIPOR1.</text>
</comment>
<comment type="subcellular location">
    <subcellularLocation>
        <location evidence="1">Cell membrane</location>
        <topology evidence="1">Lipid-anchor</topology>
        <orientation evidence="1">Cytoplasmic side</orientation>
    </subcellularLocation>
    <subcellularLocation>
        <location evidence="1">Cleavage furrow</location>
    </subcellularLocation>
    <text evidence="1">Translocates to the equatorial region before furrow formation in a ECT2-dependent manner.</text>
</comment>
<comment type="similarity">
    <text evidence="5">Belongs to the small GTPase superfamily. Rho family.</text>
</comment>
<dbReference type="EMBL" id="BC114859">
    <property type="protein sequence ID" value="AAI14860.1"/>
    <property type="molecule type" value="mRNA"/>
</dbReference>
<dbReference type="RefSeq" id="NP_001039603.1">
    <property type="nucleotide sequence ID" value="NM_001046138.2"/>
</dbReference>
<dbReference type="RefSeq" id="XP_005204165.1">
    <property type="nucleotide sequence ID" value="XM_005204108.4"/>
</dbReference>
<dbReference type="RefSeq" id="XP_010801464.1">
    <property type="nucleotide sequence ID" value="XM_010803162.4"/>
</dbReference>
<dbReference type="RefSeq" id="XP_024843820.1">
    <property type="nucleotide sequence ID" value="XM_024988052.2"/>
</dbReference>
<dbReference type="SMR" id="Q1RMJ6"/>
<dbReference type="FunCoup" id="Q1RMJ6">
    <property type="interactions" value="1994"/>
</dbReference>
<dbReference type="STRING" id="9913.ENSBTAP00000018998"/>
<dbReference type="PaxDb" id="9913-ENSBTAP00000018998"/>
<dbReference type="PeptideAtlas" id="Q1RMJ6"/>
<dbReference type="GeneID" id="513152"/>
<dbReference type="KEGG" id="bta:513152"/>
<dbReference type="CTD" id="389"/>
<dbReference type="VEuPathDB" id="HostDB:ENSBTAG00000014299"/>
<dbReference type="eggNOG" id="KOG0393">
    <property type="taxonomic scope" value="Eukaryota"/>
</dbReference>
<dbReference type="HOGENOM" id="CLU_041217_21_2_1"/>
<dbReference type="InParanoid" id="Q1RMJ6"/>
<dbReference type="OMA" id="KNGFIMF"/>
<dbReference type="OrthoDB" id="8830751at2759"/>
<dbReference type="TreeFam" id="TF300837"/>
<dbReference type="Reactome" id="R-BTA-416482">
    <property type="pathway name" value="G alpha (12/13) signalling events"/>
</dbReference>
<dbReference type="Reactome" id="R-BTA-416572">
    <property type="pathway name" value="Sema4D induced cell migration and growth-cone collapse"/>
</dbReference>
<dbReference type="Reactome" id="R-BTA-5625740">
    <property type="pathway name" value="RHO GTPases activate PKNs"/>
</dbReference>
<dbReference type="Reactome" id="R-BTA-5625900">
    <property type="pathway name" value="RHO GTPases activate CIT"/>
</dbReference>
<dbReference type="Reactome" id="R-BTA-5627117">
    <property type="pathway name" value="RHO GTPases Activate ROCKs"/>
</dbReference>
<dbReference type="Reactome" id="R-BTA-5663220">
    <property type="pathway name" value="RHO GTPases Activate Formins"/>
</dbReference>
<dbReference type="Reactome" id="R-BTA-9013106">
    <property type="pathway name" value="RHOC GTPase cycle"/>
</dbReference>
<dbReference type="Proteomes" id="UP000009136">
    <property type="component" value="Chromosome 3"/>
</dbReference>
<dbReference type="Bgee" id="ENSBTAG00000014299">
    <property type="expression patterns" value="Expressed in corpus epididymis and 103 other cell types or tissues"/>
</dbReference>
<dbReference type="GO" id="GO:0032154">
    <property type="term" value="C:cleavage furrow"/>
    <property type="evidence" value="ECO:0000250"/>
    <property type="project" value="UniProtKB"/>
</dbReference>
<dbReference type="GO" id="GO:0005829">
    <property type="term" value="C:cytosol"/>
    <property type="evidence" value="ECO:0000318"/>
    <property type="project" value="GO_Central"/>
</dbReference>
<dbReference type="GO" id="GO:0005886">
    <property type="term" value="C:plasma membrane"/>
    <property type="evidence" value="ECO:0000318"/>
    <property type="project" value="GO_Central"/>
</dbReference>
<dbReference type="GO" id="GO:0032420">
    <property type="term" value="C:stereocilium"/>
    <property type="evidence" value="ECO:0000250"/>
    <property type="project" value="UniProtKB"/>
</dbReference>
<dbReference type="GO" id="GO:0005525">
    <property type="term" value="F:GTP binding"/>
    <property type="evidence" value="ECO:0000318"/>
    <property type="project" value="GO_Central"/>
</dbReference>
<dbReference type="GO" id="GO:0003924">
    <property type="term" value="F:GTPase activity"/>
    <property type="evidence" value="ECO:0000318"/>
    <property type="project" value="GO_Central"/>
</dbReference>
<dbReference type="GO" id="GO:0019901">
    <property type="term" value="F:protein kinase binding"/>
    <property type="evidence" value="ECO:0000318"/>
    <property type="project" value="GO_Central"/>
</dbReference>
<dbReference type="GO" id="GO:0007015">
    <property type="term" value="P:actin filament organization"/>
    <property type="evidence" value="ECO:0000318"/>
    <property type="project" value="GO_Central"/>
</dbReference>
<dbReference type="GO" id="GO:0043297">
    <property type="term" value="P:apical junction assembly"/>
    <property type="evidence" value="ECO:0000250"/>
    <property type="project" value="UniProtKB"/>
</dbReference>
<dbReference type="GO" id="GO:0016477">
    <property type="term" value="P:cell migration"/>
    <property type="evidence" value="ECO:0000318"/>
    <property type="project" value="GO_Central"/>
</dbReference>
<dbReference type="GO" id="GO:0000281">
    <property type="term" value="P:mitotic cytokinesis"/>
    <property type="evidence" value="ECO:0000250"/>
    <property type="project" value="UniProtKB"/>
</dbReference>
<dbReference type="GO" id="GO:0031334">
    <property type="term" value="P:positive regulation of protein-containing complex assembly"/>
    <property type="evidence" value="ECO:0000250"/>
    <property type="project" value="UniProtKB"/>
</dbReference>
<dbReference type="GO" id="GO:0032956">
    <property type="term" value="P:regulation of actin cytoskeleton organization"/>
    <property type="evidence" value="ECO:0000318"/>
    <property type="project" value="GO_Central"/>
</dbReference>
<dbReference type="GO" id="GO:0007165">
    <property type="term" value="P:signal transduction"/>
    <property type="evidence" value="ECO:0000318"/>
    <property type="project" value="GO_Central"/>
</dbReference>
<dbReference type="GO" id="GO:1902766">
    <property type="term" value="P:skeletal muscle satellite cell migration"/>
    <property type="evidence" value="ECO:0000250"/>
    <property type="project" value="AgBase"/>
</dbReference>
<dbReference type="GO" id="GO:0007264">
    <property type="term" value="P:small GTPase-mediated signal transduction"/>
    <property type="evidence" value="ECO:0007669"/>
    <property type="project" value="InterPro"/>
</dbReference>
<dbReference type="GO" id="GO:0044319">
    <property type="term" value="P:wound healing, spreading of cells"/>
    <property type="evidence" value="ECO:0000250"/>
    <property type="project" value="AgBase"/>
</dbReference>
<dbReference type="CDD" id="cd01870">
    <property type="entry name" value="RhoA_like"/>
    <property type="match status" value="1"/>
</dbReference>
<dbReference type="FunFam" id="3.40.50.300:FF:000095">
    <property type="entry name" value="Rho-related GTP-binding protein RhoC"/>
    <property type="match status" value="1"/>
</dbReference>
<dbReference type="Gene3D" id="3.40.50.300">
    <property type="entry name" value="P-loop containing nucleotide triphosphate hydrolases"/>
    <property type="match status" value="1"/>
</dbReference>
<dbReference type="InterPro" id="IPR027417">
    <property type="entry name" value="P-loop_NTPase"/>
</dbReference>
<dbReference type="InterPro" id="IPR005225">
    <property type="entry name" value="Small_GTP-bd"/>
</dbReference>
<dbReference type="InterPro" id="IPR001806">
    <property type="entry name" value="Small_GTPase"/>
</dbReference>
<dbReference type="InterPro" id="IPR003578">
    <property type="entry name" value="Small_GTPase_Rho"/>
</dbReference>
<dbReference type="NCBIfam" id="TIGR00231">
    <property type="entry name" value="small_GTP"/>
    <property type="match status" value="1"/>
</dbReference>
<dbReference type="PANTHER" id="PTHR24072">
    <property type="entry name" value="RHO FAMILY GTPASE"/>
    <property type="match status" value="1"/>
</dbReference>
<dbReference type="Pfam" id="PF00071">
    <property type="entry name" value="Ras"/>
    <property type="match status" value="1"/>
</dbReference>
<dbReference type="PRINTS" id="PR00449">
    <property type="entry name" value="RASTRNSFRMNG"/>
</dbReference>
<dbReference type="SMART" id="SM00175">
    <property type="entry name" value="RAB"/>
    <property type="match status" value="1"/>
</dbReference>
<dbReference type="SMART" id="SM00173">
    <property type="entry name" value="RAS"/>
    <property type="match status" value="1"/>
</dbReference>
<dbReference type="SMART" id="SM00174">
    <property type="entry name" value="RHO"/>
    <property type="match status" value="1"/>
</dbReference>
<dbReference type="SUPFAM" id="SSF52540">
    <property type="entry name" value="P-loop containing nucleoside triphosphate hydrolases"/>
    <property type="match status" value="1"/>
</dbReference>
<dbReference type="PROSITE" id="PS51420">
    <property type="entry name" value="RHO"/>
    <property type="match status" value="1"/>
</dbReference>
<protein>
    <recommendedName>
        <fullName>Rho-related GTP-binding protein RhoC</fullName>
    </recommendedName>
</protein>
<organism>
    <name type="scientific">Bos taurus</name>
    <name type="common">Bovine</name>
    <dbReference type="NCBI Taxonomy" id="9913"/>
    <lineage>
        <taxon>Eukaryota</taxon>
        <taxon>Metazoa</taxon>
        <taxon>Chordata</taxon>
        <taxon>Craniata</taxon>
        <taxon>Vertebrata</taxon>
        <taxon>Euteleostomi</taxon>
        <taxon>Mammalia</taxon>
        <taxon>Eutheria</taxon>
        <taxon>Laurasiatheria</taxon>
        <taxon>Artiodactyla</taxon>
        <taxon>Ruminantia</taxon>
        <taxon>Pecora</taxon>
        <taxon>Bovidae</taxon>
        <taxon>Bovinae</taxon>
        <taxon>Bos</taxon>
    </lineage>
</organism>
<name>RHOC_BOVIN</name>
<accession>Q1RMJ6</accession>
<gene>
    <name type="primary">RHOC</name>
    <name type="synonym">ARHC</name>
</gene>